<feature type="chain" id="PRO_0000258734" description="Large ribosomal subunit protein bL35">
    <location>
        <begin position="1"/>
        <end position="67"/>
    </location>
</feature>
<sequence length="67" mass="7370">MPKMKTKSAAKKRFKITASGKVKAAAAGKRHGMIKRTNKFIRDARGTMVLAEPDGRKVVKNYLPNGL</sequence>
<accession>Q2KDK2</accession>
<protein>
    <recommendedName>
        <fullName evidence="1">Large ribosomal subunit protein bL35</fullName>
    </recommendedName>
    <alternativeName>
        <fullName evidence="2">50S ribosomal protein L35</fullName>
    </alternativeName>
</protein>
<gene>
    <name evidence="1" type="primary">rpmI</name>
    <name type="ordered locus">RHE_CH00261</name>
</gene>
<organism>
    <name type="scientific">Rhizobium etli (strain ATCC 51251 / DSM 11541 / JCM 21823 / NBRC 15573 / CFN 42)</name>
    <dbReference type="NCBI Taxonomy" id="347834"/>
    <lineage>
        <taxon>Bacteria</taxon>
        <taxon>Pseudomonadati</taxon>
        <taxon>Pseudomonadota</taxon>
        <taxon>Alphaproteobacteria</taxon>
        <taxon>Hyphomicrobiales</taxon>
        <taxon>Rhizobiaceae</taxon>
        <taxon>Rhizobium/Agrobacterium group</taxon>
        <taxon>Rhizobium</taxon>
    </lineage>
</organism>
<name>RL35_RHIEC</name>
<dbReference type="EMBL" id="CP000133">
    <property type="protein sequence ID" value="ABC89084.1"/>
    <property type="molecule type" value="Genomic_DNA"/>
</dbReference>
<dbReference type="RefSeq" id="WP_011423646.1">
    <property type="nucleotide sequence ID" value="NC_007761.1"/>
</dbReference>
<dbReference type="SMR" id="Q2KDK2"/>
<dbReference type="GeneID" id="66144448"/>
<dbReference type="KEGG" id="ret:RHE_CH00261"/>
<dbReference type="eggNOG" id="COG0291">
    <property type="taxonomic scope" value="Bacteria"/>
</dbReference>
<dbReference type="HOGENOM" id="CLU_169643_2_1_5"/>
<dbReference type="OrthoDB" id="9804851at2"/>
<dbReference type="Proteomes" id="UP000001936">
    <property type="component" value="Chromosome"/>
</dbReference>
<dbReference type="GO" id="GO:0022625">
    <property type="term" value="C:cytosolic large ribosomal subunit"/>
    <property type="evidence" value="ECO:0007669"/>
    <property type="project" value="TreeGrafter"/>
</dbReference>
<dbReference type="GO" id="GO:0003735">
    <property type="term" value="F:structural constituent of ribosome"/>
    <property type="evidence" value="ECO:0007669"/>
    <property type="project" value="InterPro"/>
</dbReference>
<dbReference type="GO" id="GO:0006412">
    <property type="term" value="P:translation"/>
    <property type="evidence" value="ECO:0007669"/>
    <property type="project" value="UniProtKB-UniRule"/>
</dbReference>
<dbReference type="FunFam" id="4.10.410.60:FF:000001">
    <property type="entry name" value="50S ribosomal protein L35"/>
    <property type="match status" value="1"/>
</dbReference>
<dbReference type="Gene3D" id="4.10.410.60">
    <property type="match status" value="1"/>
</dbReference>
<dbReference type="HAMAP" id="MF_00514">
    <property type="entry name" value="Ribosomal_bL35"/>
    <property type="match status" value="1"/>
</dbReference>
<dbReference type="InterPro" id="IPR001706">
    <property type="entry name" value="Ribosomal_bL35"/>
</dbReference>
<dbReference type="InterPro" id="IPR021137">
    <property type="entry name" value="Ribosomal_bL35-like"/>
</dbReference>
<dbReference type="InterPro" id="IPR018265">
    <property type="entry name" value="Ribosomal_bL35_CS"/>
</dbReference>
<dbReference type="InterPro" id="IPR037229">
    <property type="entry name" value="Ribosomal_bL35_sf"/>
</dbReference>
<dbReference type="NCBIfam" id="TIGR00001">
    <property type="entry name" value="rpmI_bact"/>
    <property type="match status" value="1"/>
</dbReference>
<dbReference type="PANTHER" id="PTHR33343">
    <property type="entry name" value="54S RIBOSOMAL PROTEIN BL35M"/>
    <property type="match status" value="1"/>
</dbReference>
<dbReference type="PANTHER" id="PTHR33343:SF1">
    <property type="entry name" value="LARGE RIBOSOMAL SUBUNIT PROTEIN BL35M"/>
    <property type="match status" value="1"/>
</dbReference>
<dbReference type="Pfam" id="PF01632">
    <property type="entry name" value="Ribosomal_L35p"/>
    <property type="match status" value="1"/>
</dbReference>
<dbReference type="PRINTS" id="PR00064">
    <property type="entry name" value="RIBOSOMALL35"/>
</dbReference>
<dbReference type="SUPFAM" id="SSF143034">
    <property type="entry name" value="L35p-like"/>
    <property type="match status" value="1"/>
</dbReference>
<dbReference type="PROSITE" id="PS00936">
    <property type="entry name" value="RIBOSOMAL_L35"/>
    <property type="match status" value="1"/>
</dbReference>
<evidence type="ECO:0000255" key="1">
    <source>
        <dbReference type="HAMAP-Rule" id="MF_00514"/>
    </source>
</evidence>
<evidence type="ECO:0000305" key="2"/>
<proteinExistence type="inferred from homology"/>
<keyword id="KW-1185">Reference proteome</keyword>
<keyword id="KW-0687">Ribonucleoprotein</keyword>
<keyword id="KW-0689">Ribosomal protein</keyword>
<comment type="similarity">
    <text evidence="1">Belongs to the bacterial ribosomal protein bL35 family.</text>
</comment>
<reference key="1">
    <citation type="journal article" date="2006" name="Proc. Natl. Acad. Sci. U.S.A.">
        <title>The partitioned Rhizobium etli genome: genetic and metabolic redundancy in seven interacting replicons.</title>
        <authorList>
            <person name="Gonzalez V."/>
            <person name="Santamaria R.I."/>
            <person name="Bustos P."/>
            <person name="Hernandez-Gonzalez I."/>
            <person name="Medrano-Soto A."/>
            <person name="Moreno-Hagelsieb G."/>
            <person name="Janga S.C."/>
            <person name="Ramirez M.A."/>
            <person name="Jimenez-Jacinto V."/>
            <person name="Collado-Vides J."/>
            <person name="Davila G."/>
        </authorList>
    </citation>
    <scope>NUCLEOTIDE SEQUENCE [LARGE SCALE GENOMIC DNA]</scope>
    <source>
        <strain>ATCC 51251 / DSM 11541 / JCM 21823 / NBRC 15573 / CFN 42</strain>
    </source>
</reference>